<name>SODC_DROPB</name>
<comment type="function">
    <text>Destroys radicals which are normally produced within the cells and which are toxic to biological systems.</text>
</comment>
<comment type="catalytic activity">
    <reaction>
        <text>2 superoxide + 2 H(+) = H2O2 + O2</text>
        <dbReference type="Rhea" id="RHEA:20696"/>
        <dbReference type="ChEBI" id="CHEBI:15378"/>
        <dbReference type="ChEBI" id="CHEBI:15379"/>
        <dbReference type="ChEBI" id="CHEBI:16240"/>
        <dbReference type="ChEBI" id="CHEBI:18421"/>
        <dbReference type="EC" id="1.15.1.1"/>
    </reaction>
</comment>
<comment type="cofactor">
    <cofactor evidence="1">
        <name>Cu cation</name>
        <dbReference type="ChEBI" id="CHEBI:23378"/>
    </cofactor>
    <text evidence="1">Binds 1 copper ion per subunit.</text>
</comment>
<comment type="cofactor">
    <cofactor evidence="1">
        <name>Zn(2+)</name>
        <dbReference type="ChEBI" id="CHEBI:29105"/>
    </cofactor>
    <text evidence="1">Binds 1 zinc ion per subunit.</text>
</comment>
<comment type="subunit">
    <text evidence="1">Homodimer.</text>
</comment>
<comment type="subcellular location">
    <subcellularLocation>
        <location>Cytoplasm</location>
    </subcellularLocation>
</comment>
<comment type="similarity">
    <text evidence="4">Belongs to the Cu-Zn superoxide dismutase family.</text>
</comment>
<evidence type="ECO:0000250" key="1"/>
<evidence type="ECO:0000250" key="2">
    <source>
        <dbReference type="UniProtKB" id="P61851"/>
    </source>
</evidence>
<evidence type="ECO:0000256" key="3">
    <source>
        <dbReference type="SAM" id="MobiDB-lite"/>
    </source>
</evidence>
<evidence type="ECO:0000305" key="4"/>
<accession>Q95087</accession>
<dbReference type="EC" id="1.15.1.1"/>
<dbReference type="EMBL" id="U47872">
    <property type="protein sequence ID" value="AAB50304.1"/>
    <property type="molecule type" value="Genomic_DNA"/>
</dbReference>
<dbReference type="SMR" id="Q95087"/>
<dbReference type="GO" id="GO:0005737">
    <property type="term" value="C:cytoplasm"/>
    <property type="evidence" value="ECO:0007669"/>
    <property type="project" value="UniProtKB-SubCell"/>
</dbReference>
<dbReference type="GO" id="GO:0005507">
    <property type="term" value="F:copper ion binding"/>
    <property type="evidence" value="ECO:0007669"/>
    <property type="project" value="InterPro"/>
</dbReference>
<dbReference type="GO" id="GO:0004784">
    <property type="term" value="F:superoxide dismutase activity"/>
    <property type="evidence" value="ECO:0007669"/>
    <property type="project" value="UniProtKB-EC"/>
</dbReference>
<dbReference type="CDD" id="cd00305">
    <property type="entry name" value="Cu-Zn_Superoxide_Dismutase"/>
    <property type="match status" value="1"/>
</dbReference>
<dbReference type="Gene3D" id="2.60.40.200">
    <property type="entry name" value="Superoxide dismutase, copper/zinc binding domain"/>
    <property type="match status" value="1"/>
</dbReference>
<dbReference type="InterPro" id="IPR036423">
    <property type="entry name" value="SOD-like_Cu/Zn_dom_sf"/>
</dbReference>
<dbReference type="InterPro" id="IPR024134">
    <property type="entry name" value="SOD_Cu/Zn_/chaperone"/>
</dbReference>
<dbReference type="InterPro" id="IPR018152">
    <property type="entry name" value="SOD_Cu/Zn_BS"/>
</dbReference>
<dbReference type="InterPro" id="IPR001424">
    <property type="entry name" value="SOD_Cu_Zn_dom"/>
</dbReference>
<dbReference type="PANTHER" id="PTHR10003">
    <property type="entry name" value="SUPEROXIDE DISMUTASE CU-ZN -RELATED"/>
    <property type="match status" value="1"/>
</dbReference>
<dbReference type="Pfam" id="PF00080">
    <property type="entry name" value="Sod_Cu"/>
    <property type="match status" value="1"/>
</dbReference>
<dbReference type="PRINTS" id="PR00068">
    <property type="entry name" value="CUZNDISMTASE"/>
</dbReference>
<dbReference type="SUPFAM" id="SSF49329">
    <property type="entry name" value="Cu,Zn superoxide dismutase-like"/>
    <property type="match status" value="1"/>
</dbReference>
<dbReference type="PROSITE" id="PS00087">
    <property type="entry name" value="SOD_CU_ZN_1"/>
    <property type="match status" value="1"/>
</dbReference>
<keyword id="KW-0049">Antioxidant</keyword>
<keyword id="KW-0186">Copper</keyword>
<keyword id="KW-0963">Cytoplasm</keyword>
<keyword id="KW-0479">Metal-binding</keyword>
<keyword id="KW-0560">Oxidoreductase</keyword>
<keyword id="KW-0862">Zinc</keyword>
<gene>
    <name evidence="2" type="primary">Sod1</name>
    <name evidence="2" type="synonym">Sod</name>
</gene>
<feature type="chain" id="PRO_0000164093" description="Superoxide dismutase [Cu-Zn]">
    <location>
        <begin position="1" status="less than"/>
        <end position="114" status="greater than"/>
    </location>
</feature>
<feature type="region of interest" description="Disordered" evidence="3">
    <location>
        <begin position="48"/>
        <end position="68"/>
    </location>
</feature>
<feature type="compositionally biased region" description="Basic and acidic residues" evidence="3">
    <location>
        <begin position="58"/>
        <end position="68"/>
    </location>
</feature>
<feature type="binding site" evidence="1">
    <location>
        <position position="37"/>
    </location>
    <ligand>
        <name>Cu cation</name>
        <dbReference type="ChEBI" id="CHEBI:23378"/>
        <note>catalytic</note>
    </ligand>
</feature>
<feature type="binding site" evidence="1">
    <location>
        <position position="39"/>
    </location>
    <ligand>
        <name>Cu cation</name>
        <dbReference type="ChEBI" id="CHEBI:23378"/>
        <note>catalytic</note>
    </ligand>
</feature>
<feature type="binding site" evidence="1">
    <location>
        <position position="54"/>
    </location>
    <ligand>
        <name>Cu cation</name>
        <dbReference type="ChEBI" id="CHEBI:23378"/>
        <note>catalytic</note>
    </ligand>
</feature>
<feature type="binding site" evidence="1">
    <location>
        <position position="54"/>
    </location>
    <ligand>
        <name>Zn(2+)</name>
        <dbReference type="ChEBI" id="CHEBI:29105"/>
        <note>structural</note>
    </ligand>
</feature>
<feature type="binding site" evidence="1">
    <location>
        <position position="62"/>
    </location>
    <ligand>
        <name>Zn(2+)</name>
        <dbReference type="ChEBI" id="CHEBI:29105"/>
        <note>structural</note>
    </ligand>
</feature>
<feature type="binding site" evidence="1">
    <location>
        <position position="71"/>
    </location>
    <ligand>
        <name>Zn(2+)</name>
        <dbReference type="ChEBI" id="CHEBI:29105"/>
        <note>structural</note>
    </ligand>
</feature>
<feature type="binding site" evidence="1">
    <location>
        <position position="74"/>
    </location>
    <ligand>
        <name>Zn(2+)</name>
        <dbReference type="ChEBI" id="CHEBI:29105"/>
        <note>structural</note>
    </ligand>
</feature>
<feature type="binding site" evidence="1">
    <location>
        <position position="111"/>
    </location>
    <ligand>
        <name>Cu cation</name>
        <dbReference type="ChEBI" id="CHEBI:23378"/>
        <note>catalytic</note>
    </ligand>
</feature>
<feature type="non-terminal residue">
    <location>
        <position position="1"/>
    </location>
</feature>
<feature type="non-terminal residue">
    <location>
        <position position="114"/>
    </location>
</feature>
<organism>
    <name type="scientific">Drosophila pseudoobscura bogotana</name>
    <name type="common">Fruit fly</name>
    <dbReference type="NCBI Taxonomy" id="46244"/>
    <lineage>
        <taxon>Eukaryota</taxon>
        <taxon>Metazoa</taxon>
        <taxon>Ecdysozoa</taxon>
        <taxon>Arthropoda</taxon>
        <taxon>Hexapoda</taxon>
        <taxon>Insecta</taxon>
        <taxon>Pterygota</taxon>
        <taxon>Neoptera</taxon>
        <taxon>Endopterygota</taxon>
        <taxon>Diptera</taxon>
        <taxon>Brachycera</taxon>
        <taxon>Muscomorpha</taxon>
        <taxon>Ephydroidea</taxon>
        <taxon>Drosophilidae</taxon>
        <taxon>Drosophila</taxon>
        <taxon>Sophophora</taxon>
    </lineage>
</organism>
<sequence>INGDAKGTVFFEQETSEAPVKVTGEGLGLAKGLHGFHVHEFGDNTNGCMSSGPHFNPRNKEHGAPTDENRHLGDLGNIQAAGDSPTAVSITDSKITLFGADSIIGRTVVVHADA</sequence>
<protein>
    <recommendedName>
        <fullName evidence="2">Superoxide dismutase [Cu-Zn]</fullName>
        <ecNumber>1.15.1.1</ecNumber>
    </recommendedName>
    <alternativeName>
        <fullName evidence="2">Superoxide dismutase 1</fullName>
    </alternativeName>
</protein>
<proteinExistence type="inferred from homology"/>
<reference key="1">
    <citation type="journal article" date="1997" name="Mol. Phylogenet. Evol.">
        <title>Evolution of the Drosophila obscura species group inferred from the Gpdh and Sod genes.</title>
        <authorList>
            <person name="Barrio E."/>
            <person name="Ayala F.J."/>
        </authorList>
    </citation>
    <scope>NUCLEOTIDE SEQUENCE [GENOMIC DNA]</scope>
    <source>
        <strain>NDSSC 14011-0121.69</strain>
    </source>
</reference>